<reference key="1">
    <citation type="journal article" date="1991" name="J. Biol. Chem.">
        <title>The complete primary structure of a nematode alpha 2(IV) collagen and the partial structural organization of its gene.</title>
        <authorList>
            <person name="Pettitt J."/>
            <person name="Kingston I.B."/>
        </authorList>
    </citation>
    <scope>NUCLEOTIDE SEQUENCE [MRNA] (ISOFORMS I AND II)</scope>
</reference>
<comment type="function">
    <text>Collagen type IV is specific for basement membranes.</text>
</comment>
<comment type="subunit">
    <text>Trimers of two alpha 1(IV) and one alpha 2(IV) chain. Type IV collagen forms a mesh-like network linked through intermolecular interactions between 7S domains and between NC1 domains.</text>
</comment>
<comment type="subcellular location">
    <subcellularLocation>
        <location>Secreted</location>
        <location>Extracellular space</location>
        <location>Extracellular matrix</location>
        <location>Basement membrane</location>
    </subcellularLocation>
</comment>
<comment type="alternative products">
    <event type="alternative splicing"/>
    <isoform>
        <id>P27393-1</id>
        <name>I</name>
        <sequence type="displayed"/>
    </isoform>
    <isoform>
        <id>P27393-2</id>
        <name>II</name>
        <sequence type="described" ref="VSP_001159"/>
    </isoform>
</comment>
<comment type="domain">
    <text>Alpha chains of type IV collagen have a non-collagenous domain (NC1) at their C-terminus, frequent interruptions of the G-X-Y repeats in the long central triple-helical domain (which may cause flexibility in the triple helix), and a short N-terminal triple-helical 7S domain.</text>
</comment>
<comment type="PTM">
    <text>Prolines at the third position of the tripeptide repeating unit (G-X-Y) are hydroxylated in some or all of the chains.</text>
</comment>
<comment type="PTM">
    <text>Type IV collagens contain numerous cysteine residues which are involved in inter- and intramolecular disulfide bonding. 12 of these, located in the NC1 domain, are conserved in all known type IV collagens.</text>
</comment>
<comment type="PTM">
    <text evidence="1">The trimeric structure of the NC1 domains is stabilized by covalent bonds between Lys and Met residues.</text>
</comment>
<comment type="similarity">
    <text evidence="3">Belongs to the type IV collagen family.</text>
</comment>
<accession>P27393</accession>
<organism>
    <name type="scientific">Ascaris suum</name>
    <name type="common">Pig roundworm</name>
    <name type="synonym">Ascaris lumbricoides</name>
    <dbReference type="NCBI Taxonomy" id="6253"/>
    <lineage>
        <taxon>Eukaryota</taxon>
        <taxon>Metazoa</taxon>
        <taxon>Ecdysozoa</taxon>
        <taxon>Nematoda</taxon>
        <taxon>Chromadorea</taxon>
        <taxon>Rhabditida</taxon>
        <taxon>Spirurina</taxon>
        <taxon>Ascaridomorpha</taxon>
        <taxon>Ascaridoidea</taxon>
        <taxon>Ascarididae</taxon>
        <taxon>Ascaris</taxon>
    </lineage>
</organism>
<dbReference type="EMBL" id="M67507">
    <property type="protein sequence ID" value="AAA18014.1"/>
    <property type="molecule type" value="mRNA"/>
</dbReference>
<dbReference type="PIR" id="S16366">
    <property type="entry name" value="S16366"/>
</dbReference>
<dbReference type="GO" id="GO:0005604">
    <property type="term" value="C:basement membrane"/>
    <property type="evidence" value="ECO:0007669"/>
    <property type="project" value="UniProtKB-SubCell"/>
</dbReference>
<dbReference type="GO" id="GO:0005581">
    <property type="term" value="C:collagen trimer"/>
    <property type="evidence" value="ECO:0007669"/>
    <property type="project" value="UniProtKB-KW"/>
</dbReference>
<dbReference type="GO" id="GO:0005576">
    <property type="term" value="C:extracellular region"/>
    <property type="evidence" value="ECO:0007669"/>
    <property type="project" value="UniProtKB-KW"/>
</dbReference>
<dbReference type="GO" id="GO:0005201">
    <property type="term" value="F:extracellular matrix structural constituent"/>
    <property type="evidence" value="ECO:0007669"/>
    <property type="project" value="InterPro"/>
</dbReference>
<dbReference type="FunFam" id="2.170.240.10:FF:000001">
    <property type="entry name" value="Collagen IV alpha 1 chain"/>
    <property type="match status" value="1"/>
</dbReference>
<dbReference type="Gene3D" id="2.170.240.10">
    <property type="entry name" value="Collagen IV, non-collagenous"/>
    <property type="match status" value="1"/>
</dbReference>
<dbReference type="InterPro" id="IPR008160">
    <property type="entry name" value="Collagen"/>
</dbReference>
<dbReference type="InterPro" id="IPR001442">
    <property type="entry name" value="Collagen_IV_NC"/>
</dbReference>
<dbReference type="InterPro" id="IPR036954">
    <property type="entry name" value="Collagen_IV_NC_sf"/>
</dbReference>
<dbReference type="InterPro" id="IPR050938">
    <property type="entry name" value="Collagen_Structural_Proteins"/>
</dbReference>
<dbReference type="InterPro" id="IPR016187">
    <property type="entry name" value="CTDL_fold"/>
</dbReference>
<dbReference type="PANTHER" id="PTHR37456:SF6">
    <property type="entry name" value="COLLAGEN ALPHA-1(XXIII) CHAIN-LIKE ISOFORM X2"/>
    <property type="match status" value="1"/>
</dbReference>
<dbReference type="PANTHER" id="PTHR37456">
    <property type="entry name" value="SI:CH211-266K2.1"/>
    <property type="match status" value="1"/>
</dbReference>
<dbReference type="Pfam" id="PF01413">
    <property type="entry name" value="C4"/>
    <property type="match status" value="2"/>
</dbReference>
<dbReference type="Pfam" id="PF01391">
    <property type="entry name" value="Collagen"/>
    <property type="match status" value="23"/>
</dbReference>
<dbReference type="SMART" id="SM00111">
    <property type="entry name" value="C4"/>
    <property type="match status" value="2"/>
</dbReference>
<dbReference type="SUPFAM" id="SSF56436">
    <property type="entry name" value="C-type lectin-like"/>
    <property type="match status" value="2"/>
</dbReference>
<dbReference type="PROSITE" id="PS51403">
    <property type="entry name" value="NC1_IV"/>
    <property type="match status" value="1"/>
</dbReference>
<sequence length="1763" mass="168527">MSSRLRIPLWLLLPTTALVYFVTTVSTQITCRDCTNRGCFCVGEKGSMGIPGPQGPPGAQGIRGFPGPEGLPGPKGQKGSQGPPGPQGIKGDRGIIGVPGFPGNDGANGRPGEPGPPGAPGWDGCNGTDGAPGVPGLPGPPGMPGFPGPPGVPGMKGEPAIGYAGAPGEKGDAGMPGMPGLPGPPGRDGFPGEKGDRGDVGQAGPRGPPGEAGPPGNPGIGSIGPKGDPGEQGPRGPQGPPGPVPSTGAKGTIIGPEGAPGMKGEKGDPGEAGPRGFPGTPGVAGQPGLPGMKGEKGLSGPAGPRGKEGRPGLPGPPGFKGDRGLDGLPGVPGLPGQKGEAGFPGRDGAKGARGPPGPPGGGEFSDGPPGPPGLPGREGQPGPPGADGYPGPPGPQGPQGLPGGPGLPGLPGLEGLPGPKGEKGDSGIPGAPGVQGPPGLAGPPGAKGEPGPRGVDGQSIPGLPGKDGRPGLDGLPGRKGEMGLPGVRGPPGDSLNGLPGPPGPRGPQGPKGYDGRDGAPGLPGIPGPKGDRGGTCAFCAHGAKGEKGDAGYAGLPGPQGERGLPGIPGATGAPGDDGLPGAPGRPGPPGPPGQDGLPGLPGQKGEPTQLTLRPGPPGYPGQKGETGFPGPRGQEGLPGKPGIVGAPGLPGPPGPKGEPGLTGLPEKPGKDGIPGLPGLKGEPGYGQPGMPGLPGMKGDAGLPGLPGLPGAVGPMGPPVPESQLRPGPPGKDGLPGLPGPKGEAGFPGAPGLQGPAGLPGLPGMKGNPGLPGAPGLAGLPGIPGEKGIAGKPGLPGLTGAKGEAGYPGQPGLPGPKGEPGPSTTGPPGPPGFPGLKGKDGIPGAPGLPGLEGQRGLPGVPGQKGEIGLPGLAGAPGFPGAKGEPGLPGLPGKEGPQGPPGQPGAPGFPGQKGDEGLPGLPGVSGMKGDTGLPGVPGLAGPPGQPGFPGQKGQPGFPGVAGAKGEAGLPGLPGAPGQKGEQGLAGLPGIPGMKGAPGIPGAPGQDGLPGLPGVKGDRGFNGLPGEKGEPGPAARDGEKGEPGLPGQPGLRGPQGPPGLPGLPGLKGDEGQPGYGAPGLMGEKGLPGLPGKPGRPGAPGPKGLDGAPGFPGLKGEAGLPGAPGLPGQDGLPGLPGQKGESGFPGQPGLVGPPGLPGKMGAPGIRGEKGDAGLPGLPGERGLDGLPGQKGEAGFPGAPGLPGPVGPKGSAGAPGFPGLKGEPGLPGLEGQPGPRGMKGEAGLPGAPGRDGLPGLPGMKGEAGLPGLPGQPGKSITGPKGNAGLPGLPGKDGLPGLPGLKGEPGKPGYAGAAGIKGEPGLPGIPGAKGEPGLSGIPGKRGNDGIPGKPGPAGLPGLPGMKGESGLPGPQGPAGLPGLPGLKGEPGLPGFPGQKGETGFPGQPGIPGLPGMKGDSGYPGAPGRDGAPGKQGEPGPMGPPGAQPIVQRGEKGEMGPMGAPGIRGEKGLPGLDGLPGPSGPPGFAGAKGRDGFPGQPGMPGEKGAPGLPGFPGIEGIPGPPGLPGPSGPPGPPGPSYKDGFLLVKHSQTSEVPQCPPGMVKLWDGYSLLYIEGNEKSHNQDLGHAGSCLSRFSTMPFLFCDVNNVCNYASRNDKSYWLSTTAPIPMMPVSEGGIEPYISRCAVCEAPANVIAVHSQTIQIPNCPNGWNSLWIGYSFAMHTGAGAEGGGQSLSSPGSCLEDFRATPFIECNGARGTCHYFANKFSFWLTTIEDDQQFRIPESETLKAGSLRTRVSRCQVCIRSPDVQPYRG</sequence>
<feature type="signal peptide" evidence="2">
    <location>
        <begin position="1"/>
        <end position="26"/>
    </location>
</feature>
<feature type="chain" id="PRO_0000005828" description="Collagen alpha-2(IV) chain">
    <location>
        <begin position="27"/>
        <end position="1763"/>
    </location>
</feature>
<feature type="domain" description="Collagen IV NC1" evidence="3">
    <location>
        <begin position="1533"/>
        <end position="1756"/>
    </location>
</feature>
<feature type="region of interest" description="7S domain">
    <location>
        <begin position="27"/>
        <end position="42"/>
    </location>
</feature>
<feature type="region of interest" description="Triple-helical region">
    <location>
        <begin position="43"/>
        <end position="1529"/>
    </location>
</feature>
<feature type="region of interest" description="Disordered" evidence="4">
    <location>
        <begin position="51"/>
        <end position="529"/>
    </location>
</feature>
<feature type="region of interest" description="Disordered" evidence="4">
    <location>
        <begin position="550"/>
        <end position="1529"/>
    </location>
</feature>
<feature type="compositionally biased region" description="Low complexity" evidence="4">
    <location>
        <begin position="72"/>
        <end position="81"/>
    </location>
</feature>
<feature type="compositionally biased region" description="Pro residues" evidence="4">
    <location>
        <begin position="135"/>
        <end position="152"/>
    </location>
</feature>
<feature type="compositionally biased region" description="Basic and acidic residues" evidence="4">
    <location>
        <begin position="190"/>
        <end position="199"/>
    </location>
</feature>
<feature type="compositionally biased region" description="Pro residues" evidence="4">
    <location>
        <begin position="206"/>
        <end position="217"/>
    </location>
</feature>
<feature type="compositionally biased region" description="Low complexity" evidence="4">
    <location>
        <begin position="225"/>
        <end position="235"/>
    </location>
</feature>
<feature type="compositionally biased region" description="Low complexity" evidence="4">
    <location>
        <begin position="326"/>
        <end position="335"/>
    </location>
</feature>
<feature type="compositionally biased region" description="Gly residues" evidence="4">
    <location>
        <begin position="400"/>
        <end position="409"/>
    </location>
</feature>
<feature type="compositionally biased region" description="Low complexity" evidence="4">
    <location>
        <begin position="410"/>
        <end position="419"/>
    </location>
</feature>
<feature type="compositionally biased region" description="Low complexity" evidence="4">
    <location>
        <begin position="428"/>
        <end position="453"/>
    </location>
</feature>
<feature type="compositionally biased region" description="Basic and acidic residues" evidence="4">
    <location>
        <begin position="466"/>
        <end position="481"/>
    </location>
</feature>
<feature type="compositionally biased region" description="Low complexity" evidence="4">
    <location>
        <begin position="564"/>
        <end position="582"/>
    </location>
</feature>
<feature type="compositionally biased region" description="Pro residues" evidence="4">
    <location>
        <begin position="583"/>
        <end position="592"/>
    </location>
</feature>
<feature type="compositionally biased region" description="Low complexity" evidence="4">
    <location>
        <begin position="699"/>
        <end position="714"/>
    </location>
</feature>
<feature type="compositionally biased region" description="Low complexity" evidence="4">
    <location>
        <begin position="731"/>
        <end position="783"/>
    </location>
</feature>
<feature type="compositionally biased region" description="Pro residues" evidence="4">
    <location>
        <begin position="810"/>
        <end position="832"/>
    </location>
</feature>
<feature type="compositionally biased region" description="Low complexity" evidence="4">
    <location>
        <begin position="865"/>
        <end position="895"/>
    </location>
</feature>
<feature type="compositionally biased region" description="Low complexity" evidence="4">
    <location>
        <begin position="946"/>
        <end position="977"/>
    </location>
</feature>
<feature type="compositionally biased region" description="Low complexity" evidence="4">
    <location>
        <begin position="1040"/>
        <end position="1051"/>
    </location>
</feature>
<feature type="compositionally biased region" description="Low complexity" evidence="4">
    <location>
        <begin position="1077"/>
        <end position="1086"/>
    </location>
</feature>
<feature type="compositionally biased region" description="Low complexity" evidence="4">
    <location>
        <begin position="1108"/>
        <end position="1146"/>
    </location>
</feature>
<feature type="compositionally biased region" description="Low complexity" evidence="4">
    <location>
        <begin position="1210"/>
        <end position="1231"/>
    </location>
</feature>
<feature type="compositionally biased region" description="Low complexity" evidence="4">
    <location>
        <begin position="1280"/>
        <end position="1296"/>
    </location>
</feature>
<feature type="compositionally biased region" description="Low complexity" evidence="4">
    <location>
        <begin position="1367"/>
        <end position="1386"/>
    </location>
</feature>
<feature type="compositionally biased region" description="Low complexity" evidence="4">
    <location>
        <begin position="1462"/>
        <end position="1480"/>
    </location>
</feature>
<feature type="compositionally biased region" description="Low complexity" evidence="4">
    <location>
        <begin position="1499"/>
        <end position="1510"/>
    </location>
</feature>
<feature type="compositionally biased region" description="Pro residues" evidence="4">
    <location>
        <begin position="1511"/>
        <end position="1528"/>
    </location>
</feature>
<feature type="glycosylation site" description="N-linked (GlcNAc...) asparagine" evidence="2">
    <location>
        <position position="126"/>
    </location>
</feature>
<feature type="disulfide bond" evidence="3">
    <location>
        <begin position="1548"/>
        <end position="1637"/>
    </location>
</feature>
<feature type="disulfide bond" evidence="3">
    <location>
        <begin position="1581"/>
        <end position="1634"/>
    </location>
</feature>
<feature type="disulfide bond" evidence="3">
    <location>
        <begin position="1593"/>
        <end position="1599"/>
    </location>
</feature>
<feature type="disulfide bond" evidence="3">
    <location>
        <begin position="1656"/>
        <end position="1752"/>
    </location>
</feature>
<feature type="disulfide bond" evidence="3">
    <location>
        <begin position="1690"/>
        <end position="1749"/>
    </location>
</feature>
<feature type="disulfide bond" evidence="3">
    <location>
        <begin position="1702"/>
        <end position="1709"/>
    </location>
</feature>
<feature type="splice variant" id="VSP_001159" description="In isoform II." evidence="5">
    <original>GEQGPRGPQGPPGPVPSTGAKGTIIGPEGAPGMKGEK</original>
    <variation>GDIGPAGPPGPPGPREFTGSGSIVGPRGHSGDKGVK</variation>
    <location>
        <begin position="230"/>
        <end position="266"/>
    </location>
</feature>
<feature type="glycosylation site" description="O-linked (Xyl...) (glycosaminoglycan) serine" evidence="2">
    <location sequence="P27393-2">
        <position position="249"/>
    </location>
</feature>
<keyword id="KW-0025">Alternative splicing</keyword>
<keyword id="KW-0084">Basement membrane</keyword>
<keyword id="KW-0176">Collagen</keyword>
<keyword id="KW-1015">Disulfide bond</keyword>
<keyword id="KW-0272">Extracellular matrix</keyword>
<keyword id="KW-0325">Glycoprotein</keyword>
<keyword id="KW-0379">Hydroxylation</keyword>
<keyword id="KW-0654">Proteoglycan</keyword>
<keyword id="KW-0677">Repeat</keyword>
<keyword id="KW-0964">Secreted</keyword>
<keyword id="KW-0732">Signal</keyword>
<evidence type="ECO:0000250" key="1"/>
<evidence type="ECO:0000255" key="2"/>
<evidence type="ECO:0000255" key="3">
    <source>
        <dbReference type="PROSITE-ProRule" id="PRU00736"/>
    </source>
</evidence>
<evidence type="ECO:0000256" key="4">
    <source>
        <dbReference type="SAM" id="MobiDB-lite"/>
    </source>
</evidence>
<evidence type="ECO:0000303" key="5">
    <source>
    </source>
</evidence>
<proteinExistence type="evidence at transcript level"/>
<protein>
    <recommendedName>
        <fullName>Collagen alpha-2(IV) chain</fullName>
    </recommendedName>
</protein>
<name>CO4A2_ASCSU</name>